<dbReference type="EMBL" id="CP001071">
    <property type="protein sequence ID" value="ACD04277.1"/>
    <property type="molecule type" value="Genomic_DNA"/>
</dbReference>
<dbReference type="RefSeq" id="WP_012419492.1">
    <property type="nucleotide sequence ID" value="NZ_CP071807.1"/>
</dbReference>
<dbReference type="SMR" id="B2UNG5"/>
<dbReference type="STRING" id="349741.Amuc_0439"/>
<dbReference type="PaxDb" id="349741-Amuc_0439"/>
<dbReference type="GeneID" id="60879909"/>
<dbReference type="KEGG" id="amu:Amuc_0439"/>
<dbReference type="eggNOG" id="COG0099">
    <property type="taxonomic scope" value="Bacteria"/>
</dbReference>
<dbReference type="HOGENOM" id="CLU_103849_1_2_0"/>
<dbReference type="OrthoDB" id="9803610at2"/>
<dbReference type="BioCyc" id="AMUC349741:G1GBX-485-MONOMER"/>
<dbReference type="Proteomes" id="UP000001031">
    <property type="component" value="Chromosome"/>
</dbReference>
<dbReference type="GO" id="GO:0005829">
    <property type="term" value="C:cytosol"/>
    <property type="evidence" value="ECO:0007669"/>
    <property type="project" value="TreeGrafter"/>
</dbReference>
<dbReference type="GO" id="GO:0015935">
    <property type="term" value="C:small ribosomal subunit"/>
    <property type="evidence" value="ECO:0007669"/>
    <property type="project" value="TreeGrafter"/>
</dbReference>
<dbReference type="GO" id="GO:0019843">
    <property type="term" value="F:rRNA binding"/>
    <property type="evidence" value="ECO:0007669"/>
    <property type="project" value="UniProtKB-UniRule"/>
</dbReference>
<dbReference type="GO" id="GO:0003735">
    <property type="term" value="F:structural constituent of ribosome"/>
    <property type="evidence" value="ECO:0007669"/>
    <property type="project" value="InterPro"/>
</dbReference>
<dbReference type="GO" id="GO:0000049">
    <property type="term" value="F:tRNA binding"/>
    <property type="evidence" value="ECO:0007669"/>
    <property type="project" value="UniProtKB-UniRule"/>
</dbReference>
<dbReference type="GO" id="GO:0006412">
    <property type="term" value="P:translation"/>
    <property type="evidence" value="ECO:0007669"/>
    <property type="project" value="UniProtKB-UniRule"/>
</dbReference>
<dbReference type="FunFam" id="1.10.8.50:FF:000001">
    <property type="entry name" value="30S ribosomal protein S13"/>
    <property type="match status" value="1"/>
</dbReference>
<dbReference type="Gene3D" id="1.10.8.50">
    <property type="match status" value="1"/>
</dbReference>
<dbReference type="Gene3D" id="4.10.910.10">
    <property type="entry name" value="30s ribosomal protein s13, domain 2"/>
    <property type="match status" value="1"/>
</dbReference>
<dbReference type="HAMAP" id="MF_01315">
    <property type="entry name" value="Ribosomal_uS13"/>
    <property type="match status" value="1"/>
</dbReference>
<dbReference type="InterPro" id="IPR027437">
    <property type="entry name" value="Rbsml_uS13_C"/>
</dbReference>
<dbReference type="InterPro" id="IPR001892">
    <property type="entry name" value="Ribosomal_uS13"/>
</dbReference>
<dbReference type="InterPro" id="IPR010979">
    <property type="entry name" value="Ribosomal_uS13-like_H2TH"/>
</dbReference>
<dbReference type="InterPro" id="IPR019980">
    <property type="entry name" value="Ribosomal_uS13_bac-type"/>
</dbReference>
<dbReference type="InterPro" id="IPR018269">
    <property type="entry name" value="Ribosomal_uS13_CS"/>
</dbReference>
<dbReference type="NCBIfam" id="TIGR03631">
    <property type="entry name" value="uS13_bact"/>
    <property type="match status" value="1"/>
</dbReference>
<dbReference type="PANTHER" id="PTHR10871">
    <property type="entry name" value="30S RIBOSOMAL PROTEIN S13/40S RIBOSOMAL PROTEIN S18"/>
    <property type="match status" value="1"/>
</dbReference>
<dbReference type="PANTHER" id="PTHR10871:SF1">
    <property type="entry name" value="SMALL RIBOSOMAL SUBUNIT PROTEIN US13M"/>
    <property type="match status" value="1"/>
</dbReference>
<dbReference type="Pfam" id="PF00416">
    <property type="entry name" value="Ribosomal_S13"/>
    <property type="match status" value="1"/>
</dbReference>
<dbReference type="PIRSF" id="PIRSF002134">
    <property type="entry name" value="Ribosomal_S13"/>
    <property type="match status" value="1"/>
</dbReference>
<dbReference type="SUPFAM" id="SSF46946">
    <property type="entry name" value="S13-like H2TH domain"/>
    <property type="match status" value="1"/>
</dbReference>
<dbReference type="PROSITE" id="PS00646">
    <property type="entry name" value="RIBOSOMAL_S13_1"/>
    <property type="match status" value="1"/>
</dbReference>
<dbReference type="PROSITE" id="PS50159">
    <property type="entry name" value="RIBOSOMAL_S13_2"/>
    <property type="match status" value="1"/>
</dbReference>
<reference key="1">
    <citation type="journal article" date="2011" name="PLoS ONE">
        <title>The genome of Akkermansia muciniphila, a dedicated intestinal mucin degrader, and its use in exploring intestinal metagenomes.</title>
        <authorList>
            <person name="van Passel M.W."/>
            <person name="Kant R."/>
            <person name="Zoetendal E.G."/>
            <person name="Plugge C.M."/>
            <person name="Derrien M."/>
            <person name="Malfatti S.A."/>
            <person name="Chain P.S."/>
            <person name="Woyke T."/>
            <person name="Palva A."/>
            <person name="de Vos W.M."/>
            <person name="Smidt H."/>
        </authorList>
    </citation>
    <scope>NUCLEOTIDE SEQUENCE [LARGE SCALE GENOMIC DNA]</scope>
    <source>
        <strain>ATCC BAA-835 / DSM 22959 / JCM 33894 / BCRC 81048 / CCUG 64013 / CIP 107961 / Muc</strain>
    </source>
</reference>
<comment type="function">
    <text evidence="1">Located at the top of the head of the 30S subunit, it contacts several helices of the 16S rRNA. In the 70S ribosome it contacts the 23S rRNA (bridge B1a) and protein L5 of the 50S subunit (bridge B1b), connecting the 2 subunits; these bridges are implicated in subunit movement. Contacts the tRNAs in the A and P-sites.</text>
</comment>
<comment type="subunit">
    <text evidence="1">Part of the 30S ribosomal subunit. Forms a loose heterodimer with protein S19. Forms two bridges to the 50S subunit in the 70S ribosome.</text>
</comment>
<comment type="similarity">
    <text evidence="1">Belongs to the universal ribosomal protein uS13 family.</text>
</comment>
<feature type="chain" id="PRO_1000141210" description="Small ribosomal subunit protein uS13">
    <location>
        <begin position="1"/>
        <end position="125"/>
    </location>
</feature>
<feature type="region of interest" description="Disordered" evidence="2">
    <location>
        <begin position="92"/>
        <end position="125"/>
    </location>
</feature>
<protein>
    <recommendedName>
        <fullName evidence="1">Small ribosomal subunit protein uS13</fullName>
    </recommendedName>
    <alternativeName>
        <fullName evidence="3">30S ribosomal protein S13</fullName>
    </alternativeName>
</protein>
<name>RS13_AKKM8</name>
<gene>
    <name evidence="1" type="primary">rpsM</name>
    <name type="ordered locus">Amuc_0439</name>
</gene>
<evidence type="ECO:0000255" key="1">
    <source>
        <dbReference type="HAMAP-Rule" id="MF_01315"/>
    </source>
</evidence>
<evidence type="ECO:0000256" key="2">
    <source>
        <dbReference type="SAM" id="MobiDB-lite"/>
    </source>
</evidence>
<evidence type="ECO:0000305" key="3"/>
<accession>B2UNG5</accession>
<organism>
    <name type="scientific">Akkermansia muciniphila (strain ATCC BAA-835 / DSM 22959 / JCM 33894 / BCRC 81048 / CCUG 64013 / CIP 107961 / Muc)</name>
    <dbReference type="NCBI Taxonomy" id="349741"/>
    <lineage>
        <taxon>Bacteria</taxon>
        <taxon>Pseudomonadati</taxon>
        <taxon>Verrucomicrobiota</taxon>
        <taxon>Verrucomicrobiia</taxon>
        <taxon>Verrucomicrobiales</taxon>
        <taxon>Akkermansiaceae</taxon>
        <taxon>Akkermansia</taxon>
    </lineage>
</organism>
<sequence>MARLFGTEIPNEKRIEASLPYIYGIGRSTSKRILEQAGINPDIRTGQLTDEQLTKIVQVITTDGILIEGDLRREKQSILKRLTSINCYRGQRHRRGLPVRGQRTRTNARTRKGKKKTVGAQAKKK</sequence>
<keyword id="KW-1185">Reference proteome</keyword>
<keyword id="KW-0687">Ribonucleoprotein</keyword>
<keyword id="KW-0689">Ribosomal protein</keyword>
<keyword id="KW-0694">RNA-binding</keyword>
<keyword id="KW-0699">rRNA-binding</keyword>
<keyword id="KW-0820">tRNA-binding</keyword>
<proteinExistence type="inferred from homology"/>